<gene>
    <name evidence="3" type="primary">PRR20B</name>
</gene>
<sequence length="221" mass="23262">MEEPRPSKRLRSMAPNQASGGPPPEPGCCVADPEGSVEADGPAQPAQPAKPIAYVKPFRRQPPARPESPPPAERGRRRGGSRRPGRGRGRRAGPRGDAGQRQGAEGLMAPDVHIQLDHHGEPGHQGEPEITETAAFSLSETGPPPGTVQEGPGPDVAQPELGFQEPPAAPGPQAVDWQPVLTLYPCIGFRALGDSAVLQVIQTPQGTYVQGVPVFLTDIAY</sequence>
<feature type="chain" id="PRO_0000393890" description="Proline-rich protein 20B">
    <location>
        <begin position="1"/>
        <end position="221"/>
    </location>
</feature>
<feature type="region of interest" description="Disordered" evidence="1">
    <location>
        <begin position="1"/>
        <end position="103"/>
    </location>
</feature>
<feature type="region of interest" description="Disordered" evidence="1">
    <location>
        <begin position="137"/>
        <end position="174"/>
    </location>
</feature>
<feature type="compositionally biased region" description="Low complexity" evidence="1">
    <location>
        <begin position="42"/>
        <end position="53"/>
    </location>
</feature>
<feature type="compositionally biased region" description="Pro residues" evidence="1">
    <location>
        <begin position="63"/>
        <end position="72"/>
    </location>
</feature>
<feature type="compositionally biased region" description="Basic residues" evidence="1">
    <location>
        <begin position="75"/>
        <end position="93"/>
    </location>
</feature>
<organism>
    <name type="scientific">Homo sapiens</name>
    <name type="common">Human</name>
    <dbReference type="NCBI Taxonomy" id="9606"/>
    <lineage>
        <taxon>Eukaryota</taxon>
        <taxon>Metazoa</taxon>
        <taxon>Chordata</taxon>
        <taxon>Craniata</taxon>
        <taxon>Vertebrata</taxon>
        <taxon>Euteleostomi</taxon>
        <taxon>Mammalia</taxon>
        <taxon>Eutheria</taxon>
        <taxon>Euarchontoglires</taxon>
        <taxon>Primates</taxon>
        <taxon>Haplorrhini</taxon>
        <taxon>Catarrhini</taxon>
        <taxon>Hominidae</taxon>
        <taxon>Homo</taxon>
    </lineage>
</organism>
<dbReference type="EMBL" id="AL353652">
    <property type="status" value="NOT_ANNOTATED_CDS"/>
    <property type="molecule type" value="Genomic_DNA"/>
</dbReference>
<dbReference type="CCDS" id="CCDS45053.1"/>
<dbReference type="RefSeq" id="NP_001123876.1">
    <property type="nucleotide sequence ID" value="NM_001130404.1"/>
</dbReference>
<dbReference type="RefSeq" id="NP_001123877.1">
    <property type="nucleotide sequence ID" value="NM_001130405.1"/>
</dbReference>
<dbReference type="RefSeq" id="NP_001123878.1">
    <property type="nucleotide sequence ID" value="NM_001130406.1"/>
</dbReference>
<dbReference type="RefSeq" id="NP_001123879.1">
    <property type="nucleotide sequence ID" value="NM_001130407.1"/>
</dbReference>
<dbReference type="RefSeq" id="NP_940843.1">
    <property type="nucleotide sequence ID" value="NM_198441.2"/>
</dbReference>
<dbReference type="RefSeq" id="XP_016855016.1">
    <property type="nucleotide sequence ID" value="XM_016999527.1"/>
</dbReference>
<dbReference type="BioGRID" id="125761">
    <property type="interactions" value="149"/>
</dbReference>
<dbReference type="BioGRID" id="609637">
    <property type="interactions" value="90"/>
</dbReference>
<dbReference type="BioGRID" id="609643">
    <property type="interactions" value="90"/>
</dbReference>
<dbReference type="BioGRID" id="609649">
    <property type="interactions" value="90"/>
</dbReference>
<dbReference type="BioGRID" id="609653">
    <property type="interactions" value="101"/>
</dbReference>
<dbReference type="iPTMnet" id="P86481"/>
<dbReference type="PhosphoSitePlus" id="P86481"/>
<dbReference type="BioMuta" id="PRR20B"/>
<dbReference type="DNASU" id="122183"/>
<dbReference type="Ensembl" id="ENST00000377930.1">
    <property type="protein sequence ID" value="ENSP00000367163.1"/>
    <property type="gene ID" value="ENSG00000204918.3"/>
</dbReference>
<dbReference type="GeneID" id="122183"/>
<dbReference type="GeneID" id="729233"/>
<dbReference type="GeneID" id="729240"/>
<dbReference type="GeneID" id="729246"/>
<dbReference type="GeneID" id="729250"/>
<dbReference type="KEGG" id="hsa:122183"/>
<dbReference type="KEGG" id="hsa:729233"/>
<dbReference type="KEGG" id="hsa:729240"/>
<dbReference type="KEGG" id="hsa:729246"/>
<dbReference type="KEGG" id="hsa:729250"/>
<dbReference type="MANE-Select" id="ENST00000377930.1">
    <property type="protein sequence ID" value="ENSP00000367163.1"/>
    <property type="RefSeq nucleotide sequence ID" value="NM_001130404.1"/>
    <property type="RefSeq protein sequence ID" value="NP_001123876.1"/>
</dbReference>
<dbReference type="AGR" id="HGNC:24754"/>
<dbReference type="AGR" id="HGNC:37220"/>
<dbReference type="AGR" id="HGNC:37221"/>
<dbReference type="AGR" id="HGNC:37222"/>
<dbReference type="AGR" id="HGNC:37223"/>
<dbReference type="CTD" id="122183"/>
<dbReference type="CTD" id="729233"/>
<dbReference type="CTD" id="729240"/>
<dbReference type="CTD" id="729246"/>
<dbReference type="CTD" id="729250"/>
<dbReference type="DisGeNET" id="122183"/>
<dbReference type="GeneCards" id="PRR20B"/>
<dbReference type="HGNC" id="HGNC:37220">
    <property type="gene designation" value="PRR20B"/>
</dbReference>
<dbReference type="HPA" id="ENSG00000204918">
    <property type="expression patterns" value="Not detected"/>
</dbReference>
<dbReference type="neXtProt" id="NX_P86481"/>
<dbReference type="OpenTargets" id="ENSG00000204919"/>
<dbReference type="PharmGKB" id="PA165505473"/>
<dbReference type="VEuPathDB" id="HostDB:ENSG00000204918"/>
<dbReference type="HOGENOM" id="CLU_117010_0_0_1"/>
<dbReference type="InParanoid" id="P86481"/>
<dbReference type="OMA" id="AQPEVGH"/>
<dbReference type="OrthoDB" id="9539181at2759"/>
<dbReference type="PAN-GO" id="P86481">
    <property type="GO annotations" value="0 GO annotations based on evolutionary models"/>
</dbReference>
<dbReference type="PhylomeDB" id="P86481"/>
<dbReference type="TreeFam" id="TF341860"/>
<dbReference type="PathwayCommons" id="P86481"/>
<dbReference type="BioGRID-ORCS" id="122183">
    <property type="hits" value="16 hits in 607 CRISPR screens"/>
</dbReference>
<dbReference type="BioGRID-ORCS" id="729233">
    <property type="hits" value="7 hits in 187 CRISPR screens"/>
</dbReference>
<dbReference type="BioGRID-ORCS" id="729240">
    <property type="hits" value="7 hits in 183 CRISPR screens"/>
</dbReference>
<dbReference type="BioGRID-ORCS" id="729246">
    <property type="hits" value="10 hits in 193 CRISPR screens"/>
</dbReference>
<dbReference type="BioGRID-ORCS" id="729250">
    <property type="hits" value="10 hits in 226 CRISPR screens"/>
</dbReference>
<dbReference type="Pharos" id="P86481">
    <property type="development level" value="Tdark"/>
</dbReference>
<dbReference type="PRO" id="PR:P86481"/>
<dbReference type="Proteomes" id="UP000005640">
    <property type="component" value="Chromosome 13"/>
</dbReference>
<dbReference type="RNAct" id="P86481">
    <property type="molecule type" value="protein"/>
</dbReference>
<dbReference type="Bgee" id="ENSG00000204918">
    <property type="expression patterns" value="Expressed in primordial germ cell in gonad"/>
</dbReference>
<dbReference type="InterPro" id="IPR031439">
    <property type="entry name" value="PRR20"/>
</dbReference>
<dbReference type="PANTHER" id="PTHR38819">
    <property type="entry name" value="PROLINE-RICH PROTEIN 20A-RELATED"/>
    <property type="match status" value="1"/>
</dbReference>
<dbReference type="PANTHER" id="PTHR38819:SF2">
    <property type="entry name" value="PROLINE-RICH PROTEIN 20A-RELATED"/>
    <property type="match status" value="1"/>
</dbReference>
<dbReference type="Pfam" id="PF15708">
    <property type="entry name" value="PRR20"/>
    <property type="match status" value="1"/>
</dbReference>
<accession>P86481</accession>
<accession>Q8N7V5</accession>
<keyword id="KW-1185">Reference proteome</keyword>
<protein>
    <recommendedName>
        <fullName evidence="2">Proline-rich protein 20B</fullName>
    </recommendedName>
</protein>
<reference evidence="2" key="1">
    <citation type="journal article" date="2004" name="Nature">
        <title>The DNA sequence and analysis of human chromosome 13.</title>
        <authorList>
            <person name="Dunham A."/>
            <person name="Matthews L.H."/>
            <person name="Burton J."/>
            <person name="Ashurst J.L."/>
            <person name="Howe K.L."/>
            <person name="Ashcroft K.J."/>
            <person name="Beare D.M."/>
            <person name="Burford D.C."/>
            <person name="Hunt S.E."/>
            <person name="Griffiths-Jones S."/>
            <person name="Jones M.C."/>
            <person name="Keenan S.J."/>
            <person name="Oliver K."/>
            <person name="Scott C.E."/>
            <person name="Ainscough R."/>
            <person name="Almeida J.P."/>
            <person name="Ambrose K.D."/>
            <person name="Andrews D.T."/>
            <person name="Ashwell R.I.S."/>
            <person name="Babbage A.K."/>
            <person name="Bagguley C.L."/>
            <person name="Bailey J."/>
            <person name="Bannerjee R."/>
            <person name="Barlow K.F."/>
            <person name="Bates K."/>
            <person name="Beasley H."/>
            <person name="Bird C.P."/>
            <person name="Bray-Allen S."/>
            <person name="Brown A.J."/>
            <person name="Brown J.Y."/>
            <person name="Burrill W."/>
            <person name="Carder C."/>
            <person name="Carter N.P."/>
            <person name="Chapman J.C."/>
            <person name="Clamp M.E."/>
            <person name="Clark S.Y."/>
            <person name="Clarke G."/>
            <person name="Clee C.M."/>
            <person name="Clegg S.C."/>
            <person name="Cobley V."/>
            <person name="Collins J.E."/>
            <person name="Corby N."/>
            <person name="Coville G.J."/>
            <person name="Deloukas P."/>
            <person name="Dhami P."/>
            <person name="Dunham I."/>
            <person name="Dunn M."/>
            <person name="Earthrowl M.E."/>
            <person name="Ellington A.G."/>
            <person name="Faulkner L."/>
            <person name="Frankish A.G."/>
            <person name="Frankland J."/>
            <person name="French L."/>
            <person name="Garner P."/>
            <person name="Garnett J."/>
            <person name="Gilbert J.G.R."/>
            <person name="Gilson C.J."/>
            <person name="Ghori J."/>
            <person name="Grafham D.V."/>
            <person name="Gribble S.M."/>
            <person name="Griffiths C."/>
            <person name="Hall R.E."/>
            <person name="Hammond S."/>
            <person name="Harley J.L."/>
            <person name="Hart E.A."/>
            <person name="Heath P.D."/>
            <person name="Howden P.J."/>
            <person name="Huckle E.J."/>
            <person name="Hunt P.J."/>
            <person name="Hunt A.R."/>
            <person name="Johnson C."/>
            <person name="Johnson D."/>
            <person name="Kay M."/>
            <person name="Kimberley A.M."/>
            <person name="King A."/>
            <person name="Laird G.K."/>
            <person name="Langford C.J."/>
            <person name="Lawlor S."/>
            <person name="Leongamornlert D.A."/>
            <person name="Lloyd D.M."/>
            <person name="Lloyd C."/>
            <person name="Loveland J.E."/>
            <person name="Lovell J."/>
            <person name="Martin S."/>
            <person name="Mashreghi-Mohammadi M."/>
            <person name="McLaren S.J."/>
            <person name="McMurray A."/>
            <person name="Milne S."/>
            <person name="Moore M.J.F."/>
            <person name="Nickerson T."/>
            <person name="Palmer S.A."/>
            <person name="Pearce A.V."/>
            <person name="Peck A.I."/>
            <person name="Pelan S."/>
            <person name="Phillimore B."/>
            <person name="Porter K.M."/>
            <person name="Rice C.M."/>
            <person name="Searle S."/>
            <person name="Sehra H.K."/>
            <person name="Shownkeen R."/>
            <person name="Skuce C.D."/>
            <person name="Smith M."/>
            <person name="Steward C.A."/>
            <person name="Sycamore N."/>
            <person name="Tester J."/>
            <person name="Thomas D.W."/>
            <person name="Tracey A."/>
            <person name="Tromans A."/>
            <person name="Tubby B."/>
            <person name="Wall M."/>
            <person name="Wallis J.M."/>
            <person name="West A.P."/>
            <person name="Whitehead S.L."/>
            <person name="Willey D.L."/>
            <person name="Wilming L."/>
            <person name="Wray P.W."/>
            <person name="Wright M.W."/>
            <person name="Young L."/>
            <person name="Coulson A."/>
            <person name="Durbin R.M."/>
            <person name="Hubbard T."/>
            <person name="Sulston J.E."/>
            <person name="Beck S."/>
            <person name="Bentley D.R."/>
            <person name="Rogers J."/>
            <person name="Ross M.T."/>
        </authorList>
    </citation>
    <scope>NUCLEOTIDE SEQUENCE [LARGE SCALE GENOMIC DNA]</scope>
</reference>
<evidence type="ECO:0000256" key="1">
    <source>
        <dbReference type="SAM" id="MobiDB-lite"/>
    </source>
</evidence>
<evidence type="ECO:0000305" key="2"/>
<evidence type="ECO:0000312" key="3">
    <source>
        <dbReference type="HGNC" id="HGNC:37220"/>
    </source>
</evidence>
<name>PR20B_HUMAN</name>
<comment type="similarity">
    <text evidence="2">Belongs to the PRR20 family.</text>
</comment>
<proteinExistence type="inferred from homology"/>